<feature type="signal peptide" evidence="2">
    <location>
        <begin position="1"/>
        <end position="16"/>
    </location>
</feature>
<feature type="chain" id="PRO_0000348546" description="Glycosyl hydrolase family 109 protein 1">
    <location>
        <begin position="17"/>
        <end position="464"/>
    </location>
</feature>
<feature type="binding site" evidence="1">
    <location>
        <begin position="63"/>
        <end position="64"/>
    </location>
    <ligand>
        <name>NAD(+)</name>
        <dbReference type="ChEBI" id="CHEBI:57540"/>
    </ligand>
</feature>
<feature type="binding site" evidence="1">
    <location>
        <position position="85"/>
    </location>
    <ligand>
        <name>NAD(+)</name>
        <dbReference type="ChEBI" id="CHEBI:57540"/>
    </ligand>
</feature>
<feature type="binding site" evidence="1">
    <location>
        <begin position="134"/>
        <end position="137"/>
    </location>
    <ligand>
        <name>NAD(+)</name>
        <dbReference type="ChEBI" id="CHEBI:57540"/>
    </ligand>
</feature>
<feature type="binding site" evidence="1">
    <location>
        <begin position="154"/>
        <end position="155"/>
    </location>
    <ligand>
        <name>NAD(+)</name>
        <dbReference type="ChEBI" id="CHEBI:57540"/>
    </ligand>
</feature>
<feature type="binding site" evidence="1">
    <location>
        <position position="183"/>
    </location>
    <ligand>
        <name>NAD(+)</name>
        <dbReference type="ChEBI" id="CHEBI:57540"/>
    </ligand>
</feature>
<feature type="binding site" evidence="1">
    <location>
        <position position="212"/>
    </location>
    <ligand>
        <name>substrate</name>
    </ligand>
</feature>
<feature type="binding site" evidence="1">
    <location>
        <position position="228"/>
    </location>
    <ligand>
        <name>substrate</name>
    </ligand>
</feature>
<feature type="binding site" evidence="1">
    <location>
        <begin position="240"/>
        <end position="243"/>
    </location>
    <ligand>
        <name>substrate</name>
    </ligand>
</feature>
<feature type="binding site" evidence="1">
    <location>
        <position position="240"/>
    </location>
    <ligand>
        <name>NAD(+)</name>
        <dbReference type="ChEBI" id="CHEBI:57540"/>
    </ligand>
</feature>
<feature type="binding site" evidence="1">
    <location>
        <position position="318"/>
    </location>
    <ligand>
        <name>substrate</name>
    </ligand>
</feature>
<feature type="lipid moiety-binding region" description="N-palmitoyl cysteine" evidence="2">
    <location>
        <position position="17"/>
    </location>
</feature>
<feature type="lipid moiety-binding region" description="S-diacylglycerol cysteine" evidence="2">
    <location>
        <position position="17"/>
    </location>
</feature>
<accession>Q5LGZ0</accession>
<accession>Q64XU4</accession>
<proteinExistence type="evidence at protein level"/>
<comment type="function">
    <text evidence="1">Glycosidase (By similarity). Has no alpha-N-acetylgalactosaminidase activity.</text>
</comment>
<comment type="cofactor">
    <cofactor evidence="1">
        <name>NAD(+)</name>
        <dbReference type="ChEBI" id="CHEBI:57540"/>
    </cofactor>
    <text evidence="1">Binds 1 NAD(+) per subunit. The NAD(+) cannot dissociate.</text>
</comment>
<comment type="subcellular location">
    <subcellularLocation>
        <location evidence="2">Cell membrane</location>
        <topology evidence="2">Lipid-anchor</topology>
    </subcellularLocation>
</comment>
<comment type="similarity">
    <text evidence="3">Belongs to the Gfo/Idh/MocA family. Glycosyl hydrolase 109 subfamily.</text>
</comment>
<sequence>MFKHLNALFIGLALFACTSGAVAQTIKPIETPVPVRPAGQKDVVGLTTPKLDVVRVGFIGLGMRGPGAVERFTHIPGTQIVALCDLIPERVAGAQKILTKANLPEAASYSGSEDAWKKLCERKDIDLVYIATDWKHHAQMAIYAMEHGKHVAIEVPSAMTLDEIWALINTSEKTRKHCMQLENCVYDFFELTTLNMAQQGVFGEVLHTEGAYIHNLEDFWPYYWNNWRMDYNQNHRGDVYATHGMGPACQLLDIHRGDKMNYLVSMDTKAVNGPAYIKKTTGKEVKDFQNGDQTSTLIRTEKGKTILIQHNVMTPRPYSRMYQVVGADGYASKYPIEEYCMRPTQIASNDVPNHEKLNAHGSVPADVKKALMDKYKHPIHKELEETAKKVGGHGGMDYIMDYRLVYCLRNGLPLDMDVYDLAEWCCMADLTKLSIENSSAPVAIPDFTRGAWNKVKGYRHAFAK</sequence>
<evidence type="ECO:0000250" key="1"/>
<evidence type="ECO:0000255" key="2">
    <source>
        <dbReference type="PROSITE-ProRule" id="PRU00303"/>
    </source>
</evidence>
<evidence type="ECO:0000305" key="3"/>
<reference key="1">
    <citation type="journal article" date="2007" name="Nat. Biotechnol.">
        <title>Bacterial glycosidases for the production of universal red blood cells.</title>
        <authorList>
            <person name="Liu Q.P."/>
            <person name="Sulzenbacher G."/>
            <person name="Yuan H."/>
            <person name="Bennett E.P."/>
            <person name="Pietz G."/>
            <person name="Saunders K."/>
            <person name="Spence J."/>
            <person name="Nudelman E."/>
            <person name="Levery S.B."/>
            <person name="White T."/>
            <person name="Neveu J.M."/>
            <person name="Lane W.S."/>
            <person name="Bourne Y."/>
            <person name="Olsson M.L."/>
            <person name="Henrissat B."/>
            <person name="Clausen H."/>
        </authorList>
    </citation>
    <scope>NUCLEOTIDE SEQUENCE [GENOMIC DNA]</scope>
    <scope>LACK OF FUNCTION AS ALPHA-N-ACETYLGALACTOSAMINIDASE</scope>
</reference>
<reference key="2">
    <citation type="journal article" date="2005" name="Science">
        <title>Extensive DNA inversions in the B. fragilis genome control variable gene expression.</title>
        <authorList>
            <person name="Cerdeno-Tarraga A.-M."/>
            <person name="Patrick S."/>
            <person name="Crossman L.C."/>
            <person name="Blakely G."/>
            <person name="Abratt V."/>
            <person name="Lennard N."/>
            <person name="Poxton I."/>
            <person name="Duerden B."/>
            <person name="Harris B."/>
            <person name="Quail M.A."/>
            <person name="Barron A."/>
            <person name="Clark L."/>
            <person name="Corton C."/>
            <person name="Doggett J."/>
            <person name="Holden M.T.G."/>
            <person name="Larke N."/>
            <person name="Line A."/>
            <person name="Lord A."/>
            <person name="Norbertczak H."/>
            <person name="Ormond D."/>
            <person name="Price C."/>
            <person name="Rabbinowitsch E."/>
            <person name="Woodward J."/>
            <person name="Barrell B.G."/>
            <person name="Parkhill J."/>
        </authorList>
    </citation>
    <scope>NUCLEOTIDE SEQUENCE [LARGE SCALE GENOMIC DNA]</scope>
    <source>
        <strain>ATCC 25285 / DSM 2151 / CCUG 4856 / JCM 11019 / LMG 10263 / NCTC 9343 / Onslow / VPI 2553 / EN-2</strain>
    </source>
</reference>
<protein>
    <recommendedName>
        <fullName>Glycosyl hydrolase family 109 protein 1</fullName>
        <ecNumber>3.2.1.-</ecNumber>
    </recommendedName>
</protein>
<organism>
    <name type="scientific">Bacteroides fragilis (strain ATCC 25285 / DSM 2151 / CCUG 4856 / JCM 11019 / LMG 10263 / NCTC 9343 / Onslow / VPI 2553 / EN-2)</name>
    <dbReference type="NCBI Taxonomy" id="272559"/>
    <lineage>
        <taxon>Bacteria</taxon>
        <taxon>Pseudomonadati</taxon>
        <taxon>Bacteroidota</taxon>
        <taxon>Bacteroidia</taxon>
        <taxon>Bacteroidales</taxon>
        <taxon>Bacteroidaceae</taxon>
        <taxon>Bacteroides</taxon>
    </lineage>
</organism>
<name>G1091_BACFN</name>
<gene>
    <name type="ordered locus">BF0853</name>
</gene>
<keyword id="KW-1003">Cell membrane</keyword>
<keyword id="KW-0326">Glycosidase</keyword>
<keyword id="KW-0378">Hydrolase</keyword>
<keyword id="KW-0449">Lipoprotein</keyword>
<keyword id="KW-0472">Membrane</keyword>
<keyword id="KW-0520">NAD</keyword>
<keyword id="KW-0564">Palmitate</keyword>
<keyword id="KW-0732">Signal</keyword>
<dbReference type="EC" id="3.2.1.-"/>
<dbReference type="EMBL" id="AM039446">
    <property type="protein sequence ID" value="CAJ01378.1"/>
    <property type="molecule type" value="Genomic_DNA"/>
</dbReference>
<dbReference type="EMBL" id="CR626927">
    <property type="protein sequence ID" value="CAH06596.1"/>
    <property type="molecule type" value="Genomic_DNA"/>
</dbReference>
<dbReference type="RefSeq" id="WP_005785179.1">
    <property type="nucleotide sequence ID" value="NZ_UFTH01000001.1"/>
</dbReference>
<dbReference type="SMR" id="Q5LGZ0"/>
<dbReference type="CAZy" id="GH109">
    <property type="family name" value="Glycoside Hydrolase Family 109"/>
</dbReference>
<dbReference type="PaxDb" id="272559-BF9343_0815"/>
<dbReference type="KEGG" id="bfs:BF9343_0815"/>
<dbReference type="eggNOG" id="COG0673">
    <property type="taxonomic scope" value="Bacteria"/>
</dbReference>
<dbReference type="HOGENOM" id="CLU_046965_0_0_10"/>
<dbReference type="Proteomes" id="UP000006731">
    <property type="component" value="Chromosome"/>
</dbReference>
<dbReference type="GO" id="GO:0005886">
    <property type="term" value="C:plasma membrane"/>
    <property type="evidence" value="ECO:0007669"/>
    <property type="project" value="UniProtKB-SubCell"/>
</dbReference>
<dbReference type="GO" id="GO:0016798">
    <property type="term" value="F:hydrolase activity, acting on glycosyl bonds"/>
    <property type="evidence" value="ECO:0007669"/>
    <property type="project" value="UniProtKB-KW"/>
</dbReference>
<dbReference type="GO" id="GO:0000166">
    <property type="term" value="F:nucleotide binding"/>
    <property type="evidence" value="ECO:0007669"/>
    <property type="project" value="InterPro"/>
</dbReference>
<dbReference type="Gene3D" id="3.30.360.10">
    <property type="entry name" value="Dihydrodipicolinate Reductase, domain 2"/>
    <property type="match status" value="1"/>
</dbReference>
<dbReference type="Gene3D" id="3.40.50.720">
    <property type="entry name" value="NAD(P)-binding Rossmann-like Domain"/>
    <property type="match status" value="1"/>
</dbReference>
<dbReference type="InterPro" id="IPR000683">
    <property type="entry name" value="Gfo/Idh/MocA-like_OxRdtase_N"/>
</dbReference>
<dbReference type="InterPro" id="IPR050463">
    <property type="entry name" value="Gfo/Idh/MocA_oxidrdct_glycsds"/>
</dbReference>
<dbReference type="InterPro" id="IPR049303">
    <property type="entry name" value="Glyco_hydro_109_C"/>
</dbReference>
<dbReference type="InterPro" id="IPR036291">
    <property type="entry name" value="NAD(P)-bd_dom_sf"/>
</dbReference>
<dbReference type="PANTHER" id="PTHR43818">
    <property type="entry name" value="BCDNA.GH03377"/>
    <property type="match status" value="1"/>
</dbReference>
<dbReference type="PANTHER" id="PTHR43818:SF1">
    <property type="entry name" value="GLYCOSYL HYDROLASE FAMILY 109 PROTEIN"/>
    <property type="match status" value="1"/>
</dbReference>
<dbReference type="Pfam" id="PF01408">
    <property type="entry name" value="GFO_IDH_MocA"/>
    <property type="match status" value="1"/>
</dbReference>
<dbReference type="Pfam" id="PF21252">
    <property type="entry name" value="Glyco_hydro_109_C"/>
    <property type="match status" value="1"/>
</dbReference>
<dbReference type="SUPFAM" id="SSF55347">
    <property type="entry name" value="Glyceraldehyde-3-phosphate dehydrogenase-like, C-terminal domain"/>
    <property type="match status" value="1"/>
</dbReference>
<dbReference type="SUPFAM" id="SSF51735">
    <property type="entry name" value="NAD(P)-binding Rossmann-fold domains"/>
    <property type="match status" value="1"/>
</dbReference>
<dbReference type="PROSITE" id="PS51257">
    <property type="entry name" value="PROKAR_LIPOPROTEIN"/>
    <property type="match status" value="1"/>
</dbReference>